<dbReference type="EC" id="3.4.21.-" evidence="6"/>
<dbReference type="EMBL" id="AC022472">
    <property type="protein sequence ID" value="AAF79898.1"/>
    <property type="status" value="ALT_INIT"/>
    <property type="molecule type" value="Genomic_DNA"/>
</dbReference>
<dbReference type="EMBL" id="CP002684">
    <property type="protein sequence ID" value="AEE29944.1"/>
    <property type="molecule type" value="Genomic_DNA"/>
</dbReference>
<dbReference type="PIR" id="C86335">
    <property type="entry name" value="C86335"/>
</dbReference>
<dbReference type="RefSeq" id="NP_564106.1">
    <property type="nucleotide sequence ID" value="NM_101869.2"/>
</dbReference>
<dbReference type="SMR" id="F4HSQ2"/>
<dbReference type="STRING" id="3702.F4HSQ2"/>
<dbReference type="MEROPS" id="S08.A23"/>
<dbReference type="GlyCosmos" id="F4HSQ2">
    <property type="glycosylation" value="4 sites, No reported glycans"/>
</dbReference>
<dbReference type="GlyGen" id="F4HSQ2">
    <property type="glycosylation" value="4 sites"/>
</dbReference>
<dbReference type="iPTMnet" id="F4HSQ2"/>
<dbReference type="PaxDb" id="3702-AT1G20150.1"/>
<dbReference type="EnsemblPlants" id="AT1G20150.1">
    <property type="protein sequence ID" value="AT1G20150.1"/>
    <property type="gene ID" value="AT1G20150"/>
</dbReference>
<dbReference type="GeneID" id="838605"/>
<dbReference type="Gramene" id="AT1G20150.1">
    <property type="protein sequence ID" value="AT1G20150.1"/>
    <property type="gene ID" value="AT1G20150"/>
</dbReference>
<dbReference type="KEGG" id="ath:AT1G20150"/>
<dbReference type="Araport" id="AT1G20150"/>
<dbReference type="TAIR" id="AT1G20150"/>
<dbReference type="eggNOG" id="ENOG502QUSK">
    <property type="taxonomic scope" value="Eukaryota"/>
</dbReference>
<dbReference type="HOGENOM" id="CLU_000625_4_4_1"/>
<dbReference type="InParanoid" id="F4HSQ2"/>
<dbReference type="OMA" id="ARNCAPD"/>
<dbReference type="PRO" id="PR:F4HSQ2"/>
<dbReference type="Proteomes" id="UP000006548">
    <property type="component" value="Chromosome 1"/>
</dbReference>
<dbReference type="ExpressionAtlas" id="F4HSQ2">
    <property type="expression patterns" value="baseline and differential"/>
</dbReference>
<dbReference type="GO" id="GO:0005576">
    <property type="term" value="C:extracellular region"/>
    <property type="evidence" value="ECO:0007669"/>
    <property type="project" value="UniProtKB-SubCell"/>
</dbReference>
<dbReference type="GO" id="GO:0004252">
    <property type="term" value="F:serine-type endopeptidase activity"/>
    <property type="evidence" value="ECO:0007669"/>
    <property type="project" value="InterPro"/>
</dbReference>
<dbReference type="GO" id="GO:0006508">
    <property type="term" value="P:proteolysis"/>
    <property type="evidence" value="ECO:0007669"/>
    <property type="project" value="UniProtKB-KW"/>
</dbReference>
<dbReference type="CDD" id="cd02120">
    <property type="entry name" value="PA_subtilisin_like"/>
    <property type="match status" value="1"/>
</dbReference>
<dbReference type="CDD" id="cd04852">
    <property type="entry name" value="Peptidases_S8_3"/>
    <property type="match status" value="1"/>
</dbReference>
<dbReference type="FunFam" id="3.40.50.200:FF:000006">
    <property type="entry name" value="Subtilisin-like protease SBT1.5"/>
    <property type="match status" value="1"/>
</dbReference>
<dbReference type="Gene3D" id="2.60.40.2310">
    <property type="match status" value="1"/>
</dbReference>
<dbReference type="Gene3D" id="3.50.30.30">
    <property type="match status" value="1"/>
</dbReference>
<dbReference type="Gene3D" id="3.30.70.80">
    <property type="entry name" value="Peptidase S8 propeptide/proteinase inhibitor I9"/>
    <property type="match status" value="1"/>
</dbReference>
<dbReference type="Gene3D" id="3.40.50.200">
    <property type="entry name" value="Peptidase S8/S53 domain"/>
    <property type="match status" value="1"/>
</dbReference>
<dbReference type="InterPro" id="IPR000209">
    <property type="entry name" value="Peptidase_S8/S53_dom"/>
</dbReference>
<dbReference type="InterPro" id="IPR036852">
    <property type="entry name" value="Peptidase_S8/S53_dom_sf"/>
</dbReference>
<dbReference type="InterPro" id="IPR022398">
    <property type="entry name" value="Peptidase_S8_His-AS"/>
</dbReference>
<dbReference type="InterPro" id="IPR023828">
    <property type="entry name" value="Peptidase_S8_Ser-AS"/>
</dbReference>
<dbReference type="InterPro" id="IPR015500">
    <property type="entry name" value="Peptidase_S8_subtilisin-rel"/>
</dbReference>
<dbReference type="InterPro" id="IPR034197">
    <property type="entry name" value="Peptidases_S8_3"/>
</dbReference>
<dbReference type="InterPro" id="IPR010259">
    <property type="entry name" value="S8pro/Inhibitor_I9"/>
</dbReference>
<dbReference type="InterPro" id="IPR037045">
    <property type="entry name" value="S8pro/Inhibitor_I9_sf"/>
</dbReference>
<dbReference type="InterPro" id="IPR045051">
    <property type="entry name" value="SBT"/>
</dbReference>
<dbReference type="InterPro" id="IPR041469">
    <property type="entry name" value="Subtilisin-like_FN3"/>
</dbReference>
<dbReference type="PANTHER" id="PTHR10795">
    <property type="entry name" value="PROPROTEIN CONVERTASE SUBTILISIN/KEXIN"/>
    <property type="match status" value="1"/>
</dbReference>
<dbReference type="Pfam" id="PF17766">
    <property type="entry name" value="fn3_6"/>
    <property type="match status" value="1"/>
</dbReference>
<dbReference type="Pfam" id="PF05922">
    <property type="entry name" value="Inhibitor_I9"/>
    <property type="match status" value="1"/>
</dbReference>
<dbReference type="Pfam" id="PF00082">
    <property type="entry name" value="Peptidase_S8"/>
    <property type="match status" value="1"/>
</dbReference>
<dbReference type="PRINTS" id="PR00723">
    <property type="entry name" value="SUBTILISIN"/>
</dbReference>
<dbReference type="SUPFAM" id="SSF54897">
    <property type="entry name" value="Protease propeptides/inhibitors"/>
    <property type="match status" value="1"/>
</dbReference>
<dbReference type="SUPFAM" id="SSF52743">
    <property type="entry name" value="Subtilisin-like"/>
    <property type="match status" value="1"/>
</dbReference>
<dbReference type="PROSITE" id="PS51892">
    <property type="entry name" value="SUBTILASE"/>
    <property type="match status" value="1"/>
</dbReference>
<dbReference type="PROSITE" id="PS00137">
    <property type="entry name" value="SUBTILASE_HIS"/>
    <property type="match status" value="1"/>
</dbReference>
<dbReference type="PROSITE" id="PS00138">
    <property type="entry name" value="SUBTILASE_SER"/>
    <property type="match status" value="1"/>
</dbReference>
<evidence type="ECO:0000250" key="1">
    <source>
        <dbReference type="UniProtKB" id="Q39547"/>
    </source>
</evidence>
<evidence type="ECO:0000250" key="2">
    <source>
        <dbReference type="UniProtKB" id="Q84WS0"/>
    </source>
</evidence>
<evidence type="ECO:0000255" key="3"/>
<evidence type="ECO:0000255" key="4">
    <source>
        <dbReference type="PROSITE-ProRule" id="PRU00498"/>
    </source>
</evidence>
<evidence type="ECO:0000255" key="5">
    <source>
        <dbReference type="PROSITE-ProRule" id="PRU01240"/>
    </source>
</evidence>
<evidence type="ECO:0000255" key="6">
    <source>
        <dbReference type="PROSITE-ProRule" id="PRU10082"/>
    </source>
</evidence>
<evidence type="ECO:0000303" key="7">
    <source>
    </source>
</evidence>
<evidence type="ECO:0000305" key="8"/>
<evidence type="ECO:0000312" key="9">
    <source>
        <dbReference type="Araport" id="AT1G20150"/>
    </source>
</evidence>
<evidence type="ECO:0000312" key="10">
    <source>
        <dbReference type="EMBL" id="AAF79898.1"/>
    </source>
</evidence>
<evidence type="ECO:0000312" key="11">
    <source>
        <dbReference type="Proteomes" id="UP000006548"/>
    </source>
</evidence>
<gene>
    <name evidence="7" type="primary">SBT5.1</name>
    <name evidence="9" type="ordered locus">At1g20150</name>
    <name evidence="10" type="ORF">T20H2.7</name>
</gene>
<accession>F4HSQ2</accession>
<accession>Q9LNU0</accession>
<organism evidence="11">
    <name type="scientific">Arabidopsis thaliana</name>
    <name type="common">Mouse-ear cress</name>
    <dbReference type="NCBI Taxonomy" id="3702"/>
    <lineage>
        <taxon>Eukaryota</taxon>
        <taxon>Viridiplantae</taxon>
        <taxon>Streptophyta</taxon>
        <taxon>Embryophyta</taxon>
        <taxon>Tracheophyta</taxon>
        <taxon>Spermatophyta</taxon>
        <taxon>Magnoliopsida</taxon>
        <taxon>eudicotyledons</taxon>
        <taxon>Gunneridae</taxon>
        <taxon>Pentapetalae</taxon>
        <taxon>rosids</taxon>
        <taxon>malvids</taxon>
        <taxon>Brassicales</taxon>
        <taxon>Brassicaceae</taxon>
        <taxon>Camelineae</taxon>
        <taxon>Arabidopsis</taxon>
    </lineage>
</organism>
<sequence>MMRCLTITIMFFMFFFLSVIQKCKSETSKSGDYIIYMGAASSDGSTDNDHVELLSSLLQRSGKTPMHRYKHGFSGFAAHLSEDEAHLIAKQPGVLSVFPDQMLQLHTTRSWDFLVQESYQRDTYFTEMNYEQESEMHEGDTIIGFLDSGIWPEAQSFNDRHMGPVPEKWKGTCMRGKKTQPDSFRCNRKLIGARYYNSSFFLDPDYETPRDFLGHGTHVASIAAGQIIANASYYGLASGIMRGGSPSSRIAMYRACSLLGCRGSSILAAFDDAIADGVDVISISMGLWPDNLLEDPLSIGSFHAVERGITVVCSVGNSGPSSQSVFNAAPWMITVAASTIDRGFESNILLGGDENRLIEGFGINIANIDKTQAYPLIHARSAKKIDANEEAARNCAPDTLDQTIVKGKIVVCDSDLDNQVIQWKSDEVKRLGGIGMVLVDDESMDLSFIDPSFLVTIIKPEDGIQIMSYINSTREPIATIMPTRSRTGHMLAPSIPSFSSRGPYLLTRSILKPDIAAPGVNILASWLVGDRNAAPEGKPPPLFNIESGTSMSCPHVSGIAARLKSRYPSWSPAAIRSAIMTTAVQMTNTGSHITTETGEKATPYDFGAGQVTIFGPSSPGLIYETNHMDYLNFLGYYGFTSDQIKKISNRIPQGFACPEQSNRGDISNINYPSISISNFNGKESRRVSRTVTNVASRLIGDEDTVYTVSIDAPEGLLVRVIPRRLHFRKIGDKLSYQVIFSSTTTILKDDAFGSITWSNGMYNVRSPFVVTSKDDNDSER</sequence>
<feature type="signal peptide" evidence="3">
    <location>
        <begin position="1"/>
        <end position="25"/>
    </location>
</feature>
<feature type="propeptide" id="PRO_0000435255" description="Activation peptide" evidence="1">
    <location>
        <begin position="26"/>
        <end position="106"/>
    </location>
</feature>
<feature type="chain" id="PRO_5003315062" description="Subtilisin-like protease SBT5.1" evidence="3">
    <location>
        <begin position="107"/>
        <end status="unknown"/>
    </location>
</feature>
<feature type="propeptide" id="PRO_0000435256" evidence="1">
    <location>
        <begin status="unknown"/>
        <end position="780"/>
    </location>
</feature>
<feature type="domain" description="Inhibitor I9" evidence="3">
    <location>
        <begin position="33"/>
        <end position="106"/>
    </location>
</feature>
<feature type="domain" description="Peptidase S8" evidence="5">
    <location>
        <begin position="110"/>
        <end position="617"/>
    </location>
</feature>
<feature type="domain" description="PA" evidence="3">
    <location>
        <begin position="385"/>
        <end position="469"/>
    </location>
</feature>
<feature type="active site" description="Charge relay system" evidence="5">
    <location>
        <position position="147"/>
    </location>
</feature>
<feature type="active site" description="Charge relay system" evidence="5">
    <location>
        <position position="215"/>
    </location>
</feature>
<feature type="active site" description="Charge relay system" evidence="5">
    <location>
        <position position="550"/>
    </location>
</feature>
<feature type="glycosylation site" description="N-linked (GlcNAc...) asparagine" evidence="4">
    <location>
        <position position="197"/>
    </location>
</feature>
<feature type="glycosylation site" description="N-linked (GlcNAc...) asparagine" evidence="4">
    <location>
        <position position="230"/>
    </location>
</feature>
<feature type="glycosylation site" description="N-linked (GlcNAc...) asparagine" evidence="4">
    <location>
        <position position="471"/>
    </location>
</feature>
<feature type="glycosylation site" description="N-linked (GlcNAc...) asparagine" evidence="4">
    <location>
        <position position="776"/>
    </location>
</feature>
<keyword id="KW-0068">Autocatalytic cleavage</keyword>
<keyword id="KW-0325">Glycoprotein</keyword>
<keyword id="KW-0378">Hydrolase</keyword>
<keyword id="KW-0645">Protease</keyword>
<keyword id="KW-1185">Reference proteome</keyword>
<keyword id="KW-0964">Secreted</keyword>
<keyword id="KW-0720">Serine protease</keyword>
<keyword id="KW-0732">Signal</keyword>
<keyword id="KW-0865">Zymogen</keyword>
<protein>
    <recommendedName>
        <fullName evidence="7">Subtilisin-like protease SBT5.1</fullName>
        <ecNumber evidence="6">3.4.21.-</ecNumber>
    </recommendedName>
    <alternativeName>
        <fullName evidence="7">Subtilase subfamily 5 member 1</fullName>
        <shortName evidence="7">AtSBT5.1</shortName>
    </alternativeName>
</protein>
<name>SBT51_ARATH</name>
<comment type="subcellular location">
    <subcellularLocation>
        <location evidence="2">Secreted</location>
    </subcellularLocation>
</comment>
<comment type="similarity">
    <text evidence="8">Belongs to the peptidase S8 family.</text>
</comment>
<comment type="sequence caution" evidence="8">
    <conflict type="erroneous initiation">
        <sequence resource="EMBL-CDS" id="AAF79898"/>
    </conflict>
    <text>Truncated N-terminus.</text>
</comment>
<reference key="1">
    <citation type="journal article" date="2000" name="Nature">
        <title>Sequence and analysis of chromosome 1 of the plant Arabidopsis thaliana.</title>
        <authorList>
            <person name="Theologis A."/>
            <person name="Ecker J.R."/>
            <person name="Palm C.J."/>
            <person name="Federspiel N.A."/>
            <person name="Kaul S."/>
            <person name="White O."/>
            <person name="Alonso J."/>
            <person name="Altafi H."/>
            <person name="Araujo R."/>
            <person name="Bowman C.L."/>
            <person name="Brooks S.Y."/>
            <person name="Buehler E."/>
            <person name="Chan A."/>
            <person name="Chao Q."/>
            <person name="Chen H."/>
            <person name="Cheuk R.F."/>
            <person name="Chin C.W."/>
            <person name="Chung M.K."/>
            <person name="Conn L."/>
            <person name="Conway A.B."/>
            <person name="Conway A.R."/>
            <person name="Creasy T.H."/>
            <person name="Dewar K."/>
            <person name="Dunn P."/>
            <person name="Etgu P."/>
            <person name="Feldblyum T.V."/>
            <person name="Feng J.-D."/>
            <person name="Fong B."/>
            <person name="Fujii C.Y."/>
            <person name="Gill J.E."/>
            <person name="Goldsmith A.D."/>
            <person name="Haas B."/>
            <person name="Hansen N.F."/>
            <person name="Hughes B."/>
            <person name="Huizar L."/>
            <person name="Hunter J.L."/>
            <person name="Jenkins J."/>
            <person name="Johnson-Hopson C."/>
            <person name="Khan S."/>
            <person name="Khaykin E."/>
            <person name="Kim C.J."/>
            <person name="Koo H.L."/>
            <person name="Kremenetskaia I."/>
            <person name="Kurtz D.B."/>
            <person name="Kwan A."/>
            <person name="Lam B."/>
            <person name="Langin-Hooper S."/>
            <person name="Lee A."/>
            <person name="Lee J.M."/>
            <person name="Lenz C.A."/>
            <person name="Li J.H."/>
            <person name="Li Y.-P."/>
            <person name="Lin X."/>
            <person name="Liu S.X."/>
            <person name="Liu Z.A."/>
            <person name="Luros J.S."/>
            <person name="Maiti R."/>
            <person name="Marziali A."/>
            <person name="Militscher J."/>
            <person name="Miranda M."/>
            <person name="Nguyen M."/>
            <person name="Nierman W.C."/>
            <person name="Osborne B.I."/>
            <person name="Pai G."/>
            <person name="Peterson J."/>
            <person name="Pham P.K."/>
            <person name="Rizzo M."/>
            <person name="Rooney T."/>
            <person name="Rowley D."/>
            <person name="Sakano H."/>
            <person name="Salzberg S.L."/>
            <person name="Schwartz J.R."/>
            <person name="Shinn P."/>
            <person name="Southwick A.M."/>
            <person name="Sun H."/>
            <person name="Tallon L.J."/>
            <person name="Tambunga G."/>
            <person name="Toriumi M.J."/>
            <person name="Town C.D."/>
            <person name="Utterback T."/>
            <person name="Van Aken S."/>
            <person name="Vaysberg M."/>
            <person name="Vysotskaia V.S."/>
            <person name="Walker M."/>
            <person name="Wu D."/>
            <person name="Yu G."/>
            <person name="Fraser C.M."/>
            <person name="Venter J.C."/>
            <person name="Davis R.W."/>
        </authorList>
    </citation>
    <scope>NUCLEOTIDE SEQUENCE [LARGE SCALE GENOMIC DNA]</scope>
    <source>
        <strain>cv. Columbia</strain>
    </source>
</reference>
<reference key="2">
    <citation type="journal article" date="2017" name="Plant J.">
        <title>Araport11: a complete reannotation of the Arabidopsis thaliana reference genome.</title>
        <authorList>
            <person name="Cheng C.Y."/>
            <person name="Krishnakumar V."/>
            <person name="Chan A.P."/>
            <person name="Thibaud-Nissen F."/>
            <person name="Schobel S."/>
            <person name="Town C.D."/>
        </authorList>
    </citation>
    <scope>GENOME REANNOTATION</scope>
    <source>
        <strain>cv. Columbia</strain>
    </source>
</reference>
<reference key="3">
    <citation type="journal article" date="2005" name="PLoS Comput. Biol.">
        <title>Inferring hypotheses on functional relationships of genes: Analysis of the Arabidopsis thaliana subtilase gene family.</title>
        <authorList>
            <person name="Rautengarten C."/>
            <person name="Steinhauser D."/>
            <person name="Bussis D."/>
            <person name="Stintzi A."/>
            <person name="Schaller A."/>
            <person name="Kopka J."/>
            <person name="Altmann T."/>
        </authorList>
    </citation>
    <scope>GENE FAMILY</scope>
    <scope>NOMENCLATURE</scope>
</reference>
<proteinExistence type="inferred from homology"/>